<organism>
    <name type="scientific">Caenorhabditis elegans</name>
    <dbReference type="NCBI Taxonomy" id="6239"/>
    <lineage>
        <taxon>Eukaryota</taxon>
        <taxon>Metazoa</taxon>
        <taxon>Ecdysozoa</taxon>
        <taxon>Nematoda</taxon>
        <taxon>Chromadorea</taxon>
        <taxon>Rhabditida</taxon>
        <taxon>Rhabditina</taxon>
        <taxon>Rhabditomorpha</taxon>
        <taxon>Rhabditoidea</taxon>
        <taxon>Rhabditidae</taxon>
        <taxon>Peloderinae</taxon>
        <taxon>Caenorhabditis</taxon>
    </lineage>
</organism>
<reference key="1">
    <citation type="journal article" date="1998" name="Science">
        <title>Genome sequence of the nematode C. elegans: a platform for investigating biology.</title>
        <authorList>
            <consortium name="The C. elegans sequencing consortium"/>
        </authorList>
    </citation>
    <scope>NUCLEOTIDE SEQUENCE [LARGE SCALE GENOMIC DNA]</scope>
    <source>
        <strain>Bristol N2</strain>
    </source>
</reference>
<reference key="2">
    <citation type="journal article" date="1996" name="Cell">
        <title>cul-1 is required for cell cycle exit in C. elegans and identifies a novel gene family.</title>
        <authorList>
            <person name="Kipreos E.T."/>
            <person name="Lander L.E."/>
            <person name="Wing J.P."/>
            <person name="He W.W."/>
            <person name="Hedgecock E.M."/>
        </authorList>
    </citation>
    <scope>NUCLEOTIDE SEQUENCE [MRNA] OF 18-840</scope>
    <source>
        <strain>Bristol N2</strain>
    </source>
</reference>
<reference key="3">
    <citation type="journal article" date="2007" name="Curr. Biol.">
        <title>C. elegans CUL-4 prevents rereplication by promoting the nuclear export of CDC-6 via a CKI-1-dependent pathway.</title>
        <authorList>
            <person name="Kim J."/>
            <person name="Feng H."/>
            <person name="Kipreos E.T."/>
        </authorList>
    </citation>
    <scope>FUNCTION</scope>
</reference>
<reference key="4">
    <citation type="journal article" date="2007" name="Mol. Cell. Biol.">
        <title>The Caenorhabditis elegans replication licensing factor CDT-1 is targeted for degradation by the CUL-4/DDB-1 complex.</title>
        <authorList>
            <person name="Kim Y."/>
            <person name="Kipreos E.T."/>
        </authorList>
    </citation>
    <scope>FUNCTION</scope>
    <scope>INTERACTION WITH DDB-1</scope>
</reference>
<feature type="chain" id="PRO_0000119783" description="Cullin-4">
    <location>
        <begin position="1"/>
        <end position="840"/>
    </location>
</feature>
<feature type="domain" description="Cullin neddylation" evidence="3">
    <location>
        <begin position="772"/>
        <end position="831"/>
    </location>
</feature>
<feature type="region of interest" description="Disordered" evidence="5">
    <location>
        <begin position="1"/>
        <end position="82"/>
    </location>
</feature>
<feature type="compositionally biased region" description="Polar residues" evidence="5">
    <location>
        <begin position="1"/>
        <end position="11"/>
    </location>
</feature>
<feature type="compositionally biased region" description="Basic and acidic residues" evidence="5">
    <location>
        <begin position="33"/>
        <end position="48"/>
    </location>
</feature>
<feature type="compositionally biased region" description="Polar residues" evidence="5">
    <location>
        <begin position="69"/>
        <end position="82"/>
    </location>
</feature>
<feature type="cross-link" description="Glycyl lysine isopeptide (Lys-Gly) (interchain with G-Cter in NEDD8)" evidence="1">
    <location>
        <position position="786"/>
    </location>
</feature>
<feature type="sequence conflict" description="In Ref. 2; AAC47123." evidence="8" ref="2">
    <original>QLRKSS</original>
    <variation>AGIRHE</variation>
    <location>
        <begin position="18"/>
        <end position="23"/>
    </location>
</feature>
<accession>Q17392</accession>
<accession>Q20428</accession>
<keyword id="KW-1017">Isopeptide bond</keyword>
<keyword id="KW-1185">Reference proteome</keyword>
<keyword id="KW-0832">Ubl conjugation</keyword>
<keyword id="KW-0833">Ubl conjugation pathway</keyword>
<comment type="function">
    <text evidence="6 7">Component of cullin-based E3 ubiquitin-protein ligase complexes which mediate the ubiquitination and subsequent proteasomal degradation of target proteins. The functional specificity of the E3 ubiquitin-protein ligase complex depends on the variable substrate recognition component. In association with ddb-1 directs ubiquitination of cdt-1 during S phase and is required for restraining DNA rereplication. Probably is involved in ubiquitination of cki-1.</text>
</comment>
<comment type="pathway">
    <text>Protein modification; protein ubiquitination.</text>
</comment>
<comment type="subunit">
    <text>Part of an E3 ubiquitin-protein ligase complex including cul-4 and ddb-1.</text>
</comment>
<comment type="developmental stage">
    <text>Highest levels in embryos and lower levels in larvae and adults.</text>
</comment>
<comment type="PTM">
    <text evidence="2">Neddylated. Deneddylated via its interaction with the COP9 signalosome (CSN) complex.</text>
</comment>
<comment type="similarity">
    <text evidence="4">Belongs to the cullin family.</text>
</comment>
<comment type="sequence caution" evidence="8">
    <conflict type="erroneous initiation">
        <sequence resource="EMBL-CDS" id="AAC47123"/>
    </conflict>
</comment>
<evidence type="ECO:0000250" key="1">
    <source>
        <dbReference type="UniProtKB" id="Q13616"/>
    </source>
</evidence>
<evidence type="ECO:0000250" key="2">
    <source>
        <dbReference type="UniProtKB" id="Q13620"/>
    </source>
</evidence>
<evidence type="ECO:0000255" key="3"/>
<evidence type="ECO:0000255" key="4">
    <source>
        <dbReference type="PROSITE-ProRule" id="PRU00330"/>
    </source>
</evidence>
<evidence type="ECO:0000256" key="5">
    <source>
        <dbReference type="SAM" id="MobiDB-lite"/>
    </source>
</evidence>
<evidence type="ECO:0000269" key="6">
    <source>
    </source>
</evidence>
<evidence type="ECO:0000269" key="7">
    <source>
    </source>
</evidence>
<evidence type="ECO:0000305" key="8"/>
<dbReference type="EMBL" id="FO080734">
    <property type="protein sequence ID" value="CCD66265.1"/>
    <property type="molecule type" value="Genomic_DNA"/>
</dbReference>
<dbReference type="EMBL" id="U58086">
    <property type="protein sequence ID" value="AAC47123.1"/>
    <property type="status" value="ALT_INIT"/>
    <property type="molecule type" value="mRNA"/>
</dbReference>
<dbReference type="PIR" id="T16367">
    <property type="entry name" value="T16367"/>
</dbReference>
<dbReference type="RefSeq" id="NP_495525.2">
    <property type="nucleotide sequence ID" value="NM_063124.5"/>
</dbReference>
<dbReference type="SMR" id="Q17392"/>
<dbReference type="BioGRID" id="39534">
    <property type="interactions" value="5"/>
</dbReference>
<dbReference type="FunCoup" id="Q17392">
    <property type="interactions" value="201"/>
</dbReference>
<dbReference type="IntAct" id="Q17392">
    <property type="interactions" value="2"/>
</dbReference>
<dbReference type="STRING" id="6239.F45E12.3.1"/>
<dbReference type="PaxDb" id="6239-F45E12.3"/>
<dbReference type="PeptideAtlas" id="Q17392"/>
<dbReference type="EnsemblMetazoa" id="F45E12.3.1">
    <property type="protein sequence ID" value="F45E12.3.1"/>
    <property type="gene ID" value="WBGene00000839"/>
</dbReference>
<dbReference type="GeneID" id="174198"/>
<dbReference type="KEGG" id="cel:CELE_F45E12.3"/>
<dbReference type="UCSC" id="F45E12.3">
    <property type="organism name" value="c. elegans"/>
</dbReference>
<dbReference type="AGR" id="WB:WBGene00000839"/>
<dbReference type="CTD" id="174198"/>
<dbReference type="WormBase" id="F45E12.3">
    <property type="protein sequence ID" value="CE36545"/>
    <property type="gene ID" value="WBGene00000839"/>
    <property type="gene designation" value="cul-4"/>
</dbReference>
<dbReference type="eggNOG" id="KOG2167">
    <property type="taxonomic scope" value="Eukaryota"/>
</dbReference>
<dbReference type="GeneTree" id="ENSGT00990000209871"/>
<dbReference type="HOGENOM" id="CLU_004747_7_2_1"/>
<dbReference type="InParanoid" id="Q17392"/>
<dbReference type="OMA" id="FWPSYIP"/>
<dbReference type="OrthoDB" id="27073at2759"/>
<dbReference type="PhylomeDB" id="Q17392"/>
<dbReference type="Reactome" id="R-CEL-110314">
    <property type="pathway name" value="Recognition of DNA damage by PCNA-containing replication complex"/>
</dbReference>
<dbReference type="Reactome" id="R-CEL-5696394">
    <property type="pathway name" value="DNA Damage Recognition in GG-NER"/>
</dbReference>
<dbReference type="Reactome" id="R-CEL-5696395">
    <property type="pathway name" value="Formation of Incision Complex in GG-NER"/>
</dbReference>
<dbReference type="Reactome" id="R-CEL-5696400">
    <property type="pathway name" value="Dual Incision in GG-NER"/>
</dbReference>
<dbReference type="Reactome" id="R-CEL-6781823">
    <property type="pathway name" value="Formation of TC-NER Pre-Incision Complex"/>
</dbReference>
<dbReference type="Reactome" id="R-CEL-6782135">
    <property type="pathway name" value="Dual incision in TC-NER"/>
</dbReference>
<dbReference type="Reactome" id="R-CEL-6782210">
    <property type="pathway name" value="Gap-filling DNA repair synthesis and ligation in TC-NER"/>
</dbReference>
<dbReference type="Reactome" id="R-CEL-8951664">
    <property type="pathway name" value="Neddylation"/>
</dbReference>
<dbReference type="UniPathway" id="UPA00143"/>
<dbReference type="PRO" id="PR:Q17392"/>
<dbReference type="Proteomes" id="UP000001940">
    <property type="component" value="Chromosome II"/>
</dbReference>
<dbReference type="Bgee" id="WBGene00000839">
    <property type="expression patterns" value="Expressed in germ line (C elegans) and 5 other cell types or tissues"/>
</dbReference>
<dbReference type="GO" id="GO:0080008">
    <property type="term" value="C:Cul4-RING E3 ubiquitin ligase complex"/>
    <property type="evidence" value="ECO:0000318"/>
    <property type="project" value="GO_Central"/>
</dbReference>
<dbReference type="GO" id="GO:0031625">
    <property type="term" value="F:ubiquitin protein ligase binding"/>
    <property type="evidence" value="ECO:0000318"/>
    <property type="project" value="GO_Central"/>
</dbReference>
<dbReference type="GO" id="GO:0006974">
    <property type="term" value="P:DNA damage response"/>
    <property type="evidence" value="ECO:0000318"/>
    <property type="project" value="GO_Central"/>
</dbReference>
<dbReference type="GO" id="GO:0043161">
    <property type="term" value="P:proteasome-mediated ubiquitin-dependent protein catabolic process"/>
    <property type="evidence" value="ECO:0000316"/>
    <property type="project" value="WormBase"/>
</dbReference>
<dbReference type="GO" id="GO:0016567">
    <property type="term" value="P:protein ubiquitination"/>
    <property type="evidence" value="ECO:0000318"/>
    <property type="project" value="GO_Central"/>
</dbReference>
<dbReference type="FunFam" id="1.20.1310.10:FF:000116">
    <property type="match status" value="1"/>
</dbReference>
<dbReference type="FunFam" id="1.10.10.10:FF:000274">
    <property type="entry name" value="Cullin 4B"/>
    <property type="match status" value="1"/>
</dbReference>
<dbReference type="FunFam" id="1.20.1310.10:FF:000004">
    <property type="entry name" value="Cullin 4B"/>
    <property type="match status" value="1"/>
</dbReference>
<dbReference type="FunFam" id="1.20.1310.10:FF:000002">
    <property type="entry name" value="cullin-3 isoform X1"/>
    <property type="match status" value="1"/>
</dbReference>
<dbReference type="Gene3D" id="1.20.1310.10">
    <property type="entry name" value="Cullin Repeats"/>
    <property type="match status" value="4"/>
</dbReference>
<dbReference type="Gene3D" id="3.30.230.130">
    <property type="entry name" value="Cullin, Chain C, Domain 2"/>
    <property type="match status" value="1"/>
</dbReference>
<dbReference type="Gene3D" id="1.10.10.10">
    <property type="entry name" value="Winged helix-like DNA-binding domain superfamily/Winged helix DNA-binding domain"/>
    <property type="match status" value="1"/>
</dbReference>
<dbReference type="InterPro" id="IPR045093">
    <property type="entry name" value="Cullin"/>
</dbReference>
<dbReference type="InterPro" id="IPR016157">
    <property type="entry name" value="Cullin_CS"/>
</dbReference>
<dbReference type="InterPro" id="IPR016158">
    <property type="entry name" value="Cullin_homology"/>
</dbReference>
<dbReference type="InterPro" id="IPR036317">
    <property type="entry name" value="Cullin_homology_sf"/>
</dbReference>
<dbReference type="InterPro" id="IPR001373">
    <property type="entry name" value="Cullin_N"/>
</dbReference>
<dbReference type="InterPro" id="IPR019559">
    <property type="entry name" value="Cullin_neddylation_domain"/>
</dbReference>
<dbReference type="InterPro" id="IPR016159">
    <property type="entry name" value="Cullin_repeat-like_dom_sf"/>
</dbReference>
<dbReference type="InterPro" id="IPR036388">
    <property type="entry name" value="WH-like_DNA-bd_sf"/>
</dbReference>
<dbReference type="InterPro" id="IPR036390">
    <property type="entry name" value="WH_DNA-bd_sf"/>
</dbReference>
<dbReference type="PANTHER" id="PTHR11932">
    <property type="entry name" value="CULLIN"/>
    <property type="match status" value="1"/>
</dbReference>
<dbReference type="Pfam" id="PF00888">
    <property type="entry name" value="Cullin"/>
    <property type="match status" value="1"/>
</dbReference>
<dbReference type="Pfam" id="PF10557">
    <property type="entry name" value="Cullin_Nedd8"/>
    <property type="match status" value="1"/>
</dbReference>
<dbReference type="SMART" id="SM00182">
    <property type="entry name" value="CULLIN"/>
    <property type="match status" value="1"/>
</dbReference>
<dbReference type="SMART" id="SM00884">
    <property type="entry name" value="Cullin_Nedd8"/>
    <property type="match status" value="1"/>
</dbReference>
<dbReference type="SUPFAM" id="SSF75632">
    <property type="entry name" value="Cullin homology domain"/>
    <property type="match status" value="1"/>
</dbReference>
<dbReference type="SUPFAM" id="SSF74788">
    <property type="entry name" value="Cullin repeat-like"/>
    <property type="match status" value="1"/>
</dbReference>
<dbReference type="SUPFAM" id="SSF46785">
    <property type="entry name" value="Winged helix' DNA-binding domain"/>
    <property type="match status" value="1"/>
</dbReference>
<dbReference type="PROSITE" id="PS01256">
    <property type="entry name" value="CULLIN_1"/>
    <property type="match status" value="1"/>
</dbReference>
<dbReference type="PROSITE" id="PS50069">
    <property type="entry name" value="CULLIN_2"/>
    <property type="match status" value="1"/>
</dbReference>
<sequence length="840" mass="96540">MTSGAPPTISTEKSRSKQLRKSSKRTASTVEGTEAKQMRGDTENRSDGEMDDVSTSSEIRHGNGFIENFRSQTGNSSRTTATNERIKKKLVIKNFKANANQNDVAMGDTNIDSTDGSVGRDWAVLSDNVFAILEDRKTVTTLEGLFSKVRSVCDKNQSKVLYDRLVAIVVQFAKSLKESLNAVEQVPLAEDNCEQYLEKFGQIWQAYPVKINLIRNIFLHLDRIALGATDTEILPLWECFMQIFQKTFFPNIFKEFKATKLFNALYMAMQKIMQRYPVDSPLRSLVDMLQTVHVSEEFAKFLISQLREHYNNERIDKVPKMNCNDYMEYCEDQINRYSQLVKVNFDEPSALKDVQATVTNCLIQQAIPEILTHDFDDLIDSDNISDIGRMFNLCRQCVGGEDEVRTQFSKYLKKRGEKLIATCPDEDLVSELLAFKKKVDFIMTGSFKSANDPVKMRQCLSDAFESFVNKQVDRSAELISKHFHTLLHSSNKNVSDDTTLDQMVDEAIVLFRYLRGKDVFEAYYKRGLAKRLFLERSASVDAEKMVLCKLKTECGSAFTYKLEGMFKDMDASENYGRLFNQYLEHMNKEKANFTARVITPEYWPTYDTYEINIPKEMRDTLTDYQDFYRVQHGNRNVKWHHGLASAVISASFRPGCKKELIATMYQTVILLLFNKCETWTVAEIVEHTKILEIEVVKNVLALLGGRDKPKVLQRVEGGGSEKKEGTVENLKNEKFVVNSKFTEKRCRVRIAQVNIKTAVEETKEVKEEVNSDRQYKIDAAVVRIMKARKQLNHQTLMTELLQQLRFPVSTADIKKRLESLIEREYISRDPEEASSYNYVA</sequence>
<protein>
    <recommendedName>
        <fullName>Cullin-4</fullName>
        <shortName>CUL-4</shortName>
    </recommendedName>
</protein>
<name>CUL4_CAEEL</name>
<proteinExistence type="evidence at protein level"/>
<gene>
    <name type="primary">cul-4</name>
    <name type="ORF">F45E12.3</name>
</gene>